<dbReference type="EC" id="2.7.10.1" evidence="2"/>
<dbReference type="EMBL" id="AB010384">
    <property type="protein sequence ID" value="BAA75481.1"/>
    <property type="molecule type" value="mRNA"/>
</dbReference>
<dbReference type="EMBL" id="AC111017">
    <property type="status" value="NOT_ANNOTATED_CDS"/>
    <property type="molecule type" value="Genomic_DNA"/>
</dbReference>
<dbReference type="CCDS" id="CCDS26520.1"/>
<dbReference type="SMR" id="Q9Z138"/>
<dbReference type="CORUM" id="Q9Z138"/>
<dbReference type="FunCoup" id="Q9Z138">
    <property type="interactions" value="262"/>
</dbReference>
<dbReference type="IntAct" id="Q9Z138">
    <property type="interactions" value="1"/>
</dbReference>
<dbReference type="STRING" id="10090.ENSMUSP00000021918"/>
<dbReference type="GlyCosmos" id="Q9Z138">
    <property type="glycosylation" value="3 sites, No reported glycans"/>
</dbReference>
<dbReference type="GlyGen" id="Q9Z138">
    <property type="glycosylation" value="3 sites, 2 N-linked glycans (2 sites)"/>
</dbReference>
<dbReference type="iPTMnet" id="Q9Z138"/>
<dbReference type="PhosphoSitePlus" id="Q9Z138"/>
<dbReference type="SwissPalm" id="Q9Z138"/>
<dbReference type="PaxDb" id="10090-ENSMUSP00000021918"/>
<dbReference type="ProteomicsDB" id="260831"/>
<dbReference type="Pumba" id="Q9Z138"/>
<dbReference type="Antibodypedia" id="13579">
    <property type="antibodies" value="771 antibodies from 40 providers"/>
</dbReference>
<dbReference type="AGR" id="MGI:1347521"/>
<dbReference type="MGI" id="MGI:1347521">
    <property type="gene designation" value="Ror2"/>
</dbReference>
<dbReference type="VEuPathDB" id="HostDB:ENSMUSG00000021464"/>
<dbReference type="eggNOG" id="KOG1026">
    <property type="taxonomic scope" value="Eukaryota"/>
</dbReference>
<dbReference type="InParanoid" id="Q9Z138"/>
<dbReference type="PhylomeDB" id="Q9Z138"/>
<dbReference type="TreeFam" id="TF106465"/>
<dbReference type="Reactome" id="R-MMU-5140745">
    <property type="pathway name" value="WNT5A-dependent internalization of FZD2, FZD5 and ROR2"/>
</dbReference>
<dbReference type="ChiTaRS" id="Ror2">
    <property type="organism name" value="mouse"/>
</dbReference>
<dbReference type="PRO" id="PR:Q9Z138"/>
<dbReference type="Proteomes" id="UP000000589">
    <property type="component" value="Chromosome 13"/>
</dbReference>
<dbReference type="RNAct" id="Q9Z138">
    <property type="molecule type" value="protein"/>
</dbReference>
<dbReference type="ExpressionAtlas" id="Q9Z138">
    <property type="expression patterns" value="baseline and differential"/>
</dbReference>
<dbReference type="GO" id="GO:0005886">
    <property type="term" value="C:plasma membrane"/>
    <property type="evidence" value="ECO:0000250"/>
    <property type="project" value="MGI"/>
</dbReference>
<dbReference type="GO" id="GO:0005524">
    <property type="term" value="F:ATP binding"/>
    <property type="evidence" value="ECO:0007669"/>
    <property type="project" value="UniProtKB-KW"/>
</dbReference>
<dbReference type="GO" id="GO:0005109">
    <property type="term" value="F:frizzled binding"/>
    <property type="evidence" value="ECO:0000353"/>
    <property type="project" value="BHF-UCL"/>
</dbReference>
<dbReference type="GO" id="GO:0046872">
    <property type="term" value="F:metal ion binding"/>
    <property type="evidence" value="ECO:0007669"/>
    <property type="project" value="UniProtKB-KW"/>
</dbReference>
<dbReference type="GO" id="GO:0031435">
    <property type="term" value="F:mitogen-activated protein kinase kinase kinase binding"/>
    <property type="evidence" value="ECO:0000353"/>
    <property type="project" value="WormBase"/>
</dbReference>
<dbReference type="GO" id="GO:0004714">
    <property type="term" value="F:transmembrane receptor protein tyrosine kinase activity"/>
    <property type="evidence" value="ECO:0000304"/>
    <property type="project" value="MGI"/>
</dbReference>
<dbReference type="GO" id="GO:0017147">
    <property type="term" value="F:Wnt-protein binding"/>
    <property type="evidence" value="ECO:0000353"/>
    <property type="project" value="MGI"/>
</dbReference>
<dbReference type="GO" id="GO:0030509">
    <property type="term" value="P:BMP signaling pathway"/>
    <property type="evidence" value="ECO:0000315"/>
    <property type="project" value="MGI"/>
</dbReference>
<dbReference type="GO" id="GO:0001502">
    <property type="term" value="P:cartilage condensation"/>
    <property type="evidence" value="ECO:0000315"/>
    <property type="project" value="MGI"/>
</dbReference>
<dbReference type="GO" id="GO:0045165">
    <property type="term" value="P:cell fate commitment"/>
    <property type="evidence" value="ECO:0000315"/>
    <property type="project" value="MGI"/>
</dbReference>
<dbReference type="GO" id="GO:0007169">
    <property type="term" value="P:cell surface receptor protein tyrosine kinase signaling pathway"/>
    <property type="evidence" value="ECO:0007669"/>
    <property type="project" value="InterPro"/>
</dbReference>
<dbReference type="GO" id="GO:0002062">
    <property type="term" value="P:chondrocyte differentiation"/>
    <property type="evidence" value="ECO:0000315"/>
    <property type="project" value="MGI"/>
</dbReference>
<dbReference type="GO" id="GO:0042733">
    <property type="term" value="P:embryonic digit morphogenesis"/>
    <property type="evidence" value="ECO:0000315"/>
    <property type="project" value="MGI"/>
</dbReference>
<dbReference type="GO" id="GO:0030538">
    <property type="term" value="P:embryonic genitalia morphogenesis"/>
    <property type="evidence" value="ECO:0000315"/>
    <property type="project" value="MGI"/>
</dbReference>
<dbReference type="GO" id="GO:0042472">
    <property type="term" value="P:inner ear morphogenesis"/>
    <property type="evidence" value="ECO:0000315"/>
    <property type="project" value="MGI"/>
</dbReference>
<dbReference type="GO" id="GO:0007254">
    <property type="term" value="P:JNK cascade"/>
    <property type="evidence" value="ECO:0000314"/>
    <property type="project" value="MGI"/>
</dbReference>
<dbReference type="GO" id="GO:0090090">
    <property type="term" value="P:negative regulation of canonical Wnt signaling pathway"/>
    <property type="evidence" value="ECO:0000316"/>
    <property type="project" value="MGI"/>
</dbReference>
<dbReference type="GO" id="GO:0090263">
    <property type="term" value="P:positive regulation of canonical Wnt signaling pathway"/>
    <property type="evidence" value="ECO:0000314"/>
    <property type="project" value="BHF-UCL"/>
</dbReference>
<dbReference type="GO" id="GO:0045893">
    <property type="term" value="P:positive regulation of DNA-templated transcription"/>
    <property type="evidence" value="ECO:0000314"/>
    <property type="project" value="BHF-UCL"/>
</dbReference>
<dbReference type="GO" id="GO:0060828">
    <property type="term" value="P:regulation of canonical Wnt signaling pathway"/>
    <property type="evidence" value="ECO:0000315"/>
    <property type="project" value="MGI"/>
</dbReference>
<dbReference type="GO" id="GO:0001501">
    <property type="term" value="P:skeletal system development"/>
    <property type="evidence" value="ECO:0000315"/>
    <property type="project" value="MGI"/>
</dbReference>
<dbReference type="GO" id="GO:0060395">
    <property type="term" value="P:SMAD protein signal transduction"/>
    <property type="evidence" value="ECO:0000315"/>
    <property type="project" value="MGI"/>
</dbReference>
<dbReference type="GO" id="GO:0007224">
    <property type="term" value="P:smoothened signaling pathway"/>
    <property type="evidence" value="ECO:0000315"/>
    <property type="project" value="MGI"/>
</dbReference>
<dbReference type="GO" id="GO:0001756">
    <property type="term" value="P:somitogenesis"/>
    <property type="evidence" value="ECO:0000315"/>
    <property type="project" value="MGI"/>
</dbReference>
<dbReference type="GO" id="GO:0007223">
    <property type="term" value="P:Wnt signaling pathway, calcium modulating pathway"/>
    <property type="evidence" value="ECO:0000353"/>
    <property type="project" value="MGI"/>
</dbReference>
<dbReference type="GO" id="GO:0060071">
    <property type="term" value="P:Wnt signaling pathway, planar cell polarity pathway"/>
    <property type="evidence" value="ECO:0000315"/>
    <property type="project" value="MGI"/>
</dbReference>
<dbReference type="CDD" id="cd07468">
    <property type="entry name" value="CRD_TK_ROR2"/>
    <property type="match status" value="1"/>
</dbReference>
<dbReference type="CDD" id="cd00108">
    <property type="entry name" value="KR"/>
    <property type="match status" value="1"/>
</dbReference>
<dbReference type="FunFam" id="1.10.2000.10:FF:000002">
    <property type="entry name" value="Inactive tyrosine-protein kinase transmembrane receptor ROR1"/>
    <property type="match status" value="1"/>
</dbReference>
<dbReference type="FunFam" id="2.40.20.10:FF:000003">
    <property type="entry name" value="Inactive tyrosine-protein kinase transmembrane receptor ROR1"/>
    <property type="match status" value="1"/>
</dbReference>
<dbReference type="FunFam" id="2.60.40.10:FF:000242">
    <property type="entry name" value="Inactive tyrosine-protein kinase transmembrane receptor ROR1"/>
    <property type="match status" value="1"/>
</dbReference>
<dbReference type="FunFam" id="1.10.510.10:FF:000116">
    <property type="entry name" value="inactive tyrosine-protein kinase transmembrane receptor ROR1"/>
    <property type="match status" value="1"/>
</dbReference>
<dbReference type="FunFam" id="3.30.200.20:FF:000139">
    <property type="entry name" value="inactive tyrosine-protein kinase transmembrane receptor ROR1"/>
    <property type="match status" value="1"/>
</dbReference>
<dbReference type="Gene3D" id="1.10.2000.10">
    <property type="entry name" value="Frizzled cysteine-rich domain"/>
    <property type="match status" value="1"/>
</dbReference>
<dbReference type="Gene3D" id="2.60.40.10">
    <property type="entry name" value="Immunoglobulins"/>
    <property type="match status" value="1"/>
</dbReference>
<dbReference type="Gene3D" id="3.30.200.20">
    <property type="entry name" value="Phosphorylase Kinase, domain 1"/>
    <property type="match status" value="1"/>
</dbReference>
<dbReference type="Gene3D" id="2.40.20.10">
    <property type="entry name" value="Plasminogen Kringle 4"/>
    <property type="match status" value="1"/>
</dbReference>
<dbReference type="Gene3D" id="1.10.510.10">
    <property type="entry name" value="Transferase(Phosphotransferase) domain 1"/>
    <property type="match status" value="1"/>
</dbReference>
<dbReference type="InterPro" id="IPR020067">
    <property type="entry name" value="Frizzled_dom"/>
</dbReference>
<dbReference type="InterPro" id="IPR036790">
    <property type="entry name" value="Frizzled_dom_sf"/>
</dbReference>
<dbReference type="InterPro" id="IPR007110">
    <property type="entry name" value="Ig-like_dom"/>
</dbReference>
<dbReference type="InterPro" id="IPR036179">
    <property type="entry name" value="Ig-like_dom_sf"/>
</dbReference>
<dbReference type="InterPro" id="IPR013783">
    <property type="entry name" value="Ig-like_fold"/>
</dbReference>
<dbReference type="InterPro" id="IPR013098">
    <property type="entry name" value="Ig_I-set"/>
</dbReference>
<dbReference type="InterPro" id="IPR003599">
    <property type="entry name" value="Ig_sub"/>
</dbReference>
<dbReference type="InterPro" id="IPR003598">
    <property type="entry name" value="Ig_sub2"/>
</dbReference>
<dbReference type="InterPro" id="IPR011009">
    <property type="entry name" value="Kinase-like_dom_sf"/>
</dbReference>
<dbReference type="InterPro" id="IPR000001">
    <property type="entry name" value="Kringle"/>
</dbReference>
<dbReference type="InterPro" id="IPR013806">
    <property type="entry name" value="Kringle-like"/>
</dbReference>
<dbReference type="InterPro" id="IPR018056">
    <property type="entry name" value="Kringle_CS"/>
</dbReference>
<dbReference type="InterPro" id="IPR038178">
    <property type="entry name" value="Kringle_sf"/>
</dbReference>
<dbReference type="InterPro" id="IPR000719">
    <property type="entry name" value="Prot_kinase_dom"/>
</dbReference>
<dbReference type="InterPro" id="IPR050122">
    <property type="entry name" value="RTK"/>
</dbReference>
<dbReference type="InterPro" id="IPR001245">
    <property type="entry name" value="Ser-Thr/Tyr_kinase_cat_dom"/>
</dbReference>
<dbReference type="InterPro" id="IPR008266">
    <property type="entry name" value="Tyr_kinase_AS"/>
</dbReference>
<dbReference type="InterPro" id="IPR016247">
    <property type="entry name" value="Tyr_kinase_rcpt_ROR"/>
</dbReference>
<dbReference type="PANTHER" id="PTHR24416">
    <property type="entry name" value="TYROSINE-PROTEIN KINASE RECEPTOR"/>
    <property type="match status" value="1"/>
</dbReference>
<dbReference type="PANTHER" id="PTHR24416:SF132">
    <property type="entry name" value="TYROSINE-PROTEIN KINASE TRANSMEMBRANE RECEPTOR ROR2"/>
    <property type="match status" value="1"/>
</dbReference>
<dbReference type="Pfam" id="PF01392">
    <property type="entry name" value="Fz"/>
    <property type="match status" value="1"/>
</dbReference>
<dbReference type="Pfam" id="PF07679">
    <property type="entry name" value="I-set"/>
    <property type="match status" value="1"/>
</dbReference>
<dbReference type="Pfam" id="PF00051">
    <property type="entry name" value="Kringle"/>
    <property type="match status" value="1"/>
</dbReference>
<dbReference type="Pfam" id="PF07714">
    <property type="entry name" value="PK_Tyr_Ser-Thr"/>
    <property type="match status" value="1"/>
</dbReference>
<dbReference type="PIRSF" id="PIRSF000624">
    <property type="entry name" value="TyrPK_TMrec_ROR"/>
    <property type="match status" value="1"/>
</dbReference>
<dbReference type="PRINTS" id="PR00018">
    <property type="entry name" value="KRINGLE"/>
</dbReference>
<dbReference type="PRINTS" id="PR00109">
    <property type="entry name" value="TYRKINASE"/>
</dbReference>
<dbReference type="SMART" id="SM00409">
    <property type="entry name" value="IG"/>
    <property type="match status" value="1"/>
</dbReference>
<dbReference type="SMART" id="SM00408">
    <property type="entry name" value="IGc2"/>
    <property type="match status" value="1"/>
</dbReference>
<dbReference type="SMART" id="SM00130">
    <property type="entry name" value="KR"/>
    <property type="match status" value="1"/>
</dbReference>
<dbReference type="SUPFAM" id="SSF48726">
    <property type="entry name" value="Immunoglobulin"/>
    <property type="match status" value="1"/>
</dbReference>
<dbReference type="SUPFAM" id="SSF57440">
    <property type="entry name" value="Kringle-like"/>
    <property type="match status" value="1"/>
</dbReference>
<dbReference type="SUPFAM" id="SSF56112">
    <property type="entry name" value="Protein kinase-like (PK-like)"/>
    <property type="match status" value="1"/>
</dbReference>
<dbReference type="PROSITE" id="PS50038">
    <property type="entry name" value="FZ"/>
    <property type="match status" value="1"/>
</dbReference>
<dbReference type="PROSITE" id="PS50835">
    <property type="entry name" value="IG_LIKE"/>
    <property type="match status" value="1"/>
</dbReference>
<dbReference type="PROSITE" id="PS00021">
    <property type="entry name" value="KRINGLE_1"/>
    <property type="match status" value="1"/>
</dbReference>
<dbReference type="PROSITE" id="PS50070">
    <property type="entry name" value="KRINGLE_2"/>
    <property type="match status" value="1"/>
</dbReference>
<dbReference type="PROSITE" id="PS50011">
    <property type="entry name" value="PROTEIN_KINASE_DOM"/>
    <property type="match status" value="1"/>
</dbReference>
<dbReference type="PROSITE" id="PS00109">
    <property type="entry name" value="PROTEIN_KINASE_TYR"/>
    <property type="match status" value="1"/>
</dbReference>
<protein>
    <recommendedName>
        <fullName>Tyrosine-protein kinase transmembrane receptor ROR2</fullName>
        <shortName>mROR2</shortName>
        <ecNumber evidence="2">2.7.10.1</ecNumber>
    </recommendedName>
    <alternativeName>
        <fullName>Neurotrophic tyrosine kinase, receptor-related 2</fullName>
    </alternativeName>
</protein>
<name>ROR2_MOUSE</name>
<organism>
    <name type="scientific">Mus musculus</name>
    <name type="common">Mouse</name>
    <dbReference type="NCBI Taxonomy" id="10090"/>
    <lineage>
        <taxon>Eukaryota</taxon>
        <taxon>Metazoa</taxon>
        <taxon>Chordata</taxon>
        <taxon>Craniata</taxon>
        <taxon>Vertebrata</taxon>
        <taxon>Euteleostomi</taxon>
        <taxon>Mammalia</taxon>
        <taxon>Eutheria</taxon>
        <taxon>Euarchontoglires</taxon>
        <taxon>Glires</taxon>
        <taxon>Rodentia</taxon>
        <taxon>Myomorpha</taxon>
        <taxon>Muroidea</taxon>
        <taxon>Muridae</taxon>
        <taxon>Murinae</taxon>
        <taxon>Mus</taxon>
        <taxon>Mus</taxon>
    </lineage>
</organism>
<feature type="signal peptide" evidence="3">
    <location>
        <begin position="1"/>
        <end position="33"/>
    </location>
</feature>
<feature type="chain" id="PRO_0000024461" description="Tyrosine-protein kinase transmembrane receptor ROR2">
    <location>
        <begin position="34"/>
        <end position="944"/>
    </location>
</feature>
<feature type="topological domain" description="Extracellular" evidence="3">
    <location>
        <begin position="34"/>
        <end position="403"/>
    </location>
</feature>
<feature type="transmembrane region" description="Helical" evidence="3">
    <location>
        <begin position="404"/>
        <end position="424"/>
    </location>
</feature>
<feature type="topological domain" description="Cytoplasmic" evidence="3">
    <location>
        <begin position="425"/>
        <end position="944"/>
    </location>
</feature>
<feature type="domain" description="Ig-like C2-type">
    <location>
        <begin position="55"/>
        <end position="145"/>
    </location>
</feature>
<feature type="domain" description="FZ" evidence="4">
    <location>
        <begin position="169"/>
        <end position="303"/>
    </location>
</feature>
<feature type="domain" description="Kringle" evidence="5">
    <location>
        <begin position="316"/>
        <end position="394"/>
    </location>
</feature>
<feature type="domain" description="Protein kinase" evidence="6">
    <location>
        <begin position="473"/>
        <end position="746"/>
    </location>
</feature>
<feature type="region of interest" description="Disordered" evidence="8">
    <location>
        <begin position="757"/>
        <end position="779"/>
    </location>
</feature>
<feature type="region of interest" description="Disordered" evidence="8">
    <location>
        <begin position="850"/>
        <end position="879"/>
    </location>
</feature>
<feature type="region of interest" description="Disordered" evidence="8">
    <location>
        <begin position="898"/>
        <end position="929"/>
    </location>
</feature>
<feature type="compositionally biased region" description="Low complexity" evidence="8">
    <location>
        <begin position="765"/>
        <end position="779"/>
    </location>
</feature>
<feature type="compositionally biased region" description="Low complexity" evidence="8">
    <location>
        <begin position="857"/>
        <end position="872"/>
    </location>
</feature>
<feature type="active site" description="Proton acceptor" evidence="6 7">
    <location>
        <position position="615"/>
    </location>
</feature>
<feature type="binding site" evidence="6">
    <location>
        <begin position="479"/>
        <end position="487"/>
    </location>
    <ligand>
        <name>ATP</name>
        <dbReference type="ChEBI" id="CHEBI:30616"/>
    </ligand>
</feature>
<feature type="binding site" evidence="6">
    <location>
        <position position="507"/>
    </location>
    <ligand>
        <name>ATP</name>
        <dbReference type="ChEBI" id="CHEBI:30616"/>
    </ligand>
</feature>
<feature type="modified residue" description="Phosphotyrosine; by autocatalysis" evidence="1">
    <location>
        <position position="646"/>
    </location>
</feature>
<feature type="modified residue" description="Asymmetric dimethylarginine" evidence="12">
    <location>
        <position position="785"/>
    </location>
</feature>
<feature type="glycosylation site" description="N-linked (GlcNAc...) asparagine" evidence="3">
    <location>
        <position position="70"/>
    </location>
</feature>
<feature type="glycosylation site" description="N-linked (GlcNAc...) asparagine" evidence="3">
    <location>
        <position position="188"/>
    </location>
</feature>
<feature type="glycosylation site" description="N-linked (GlcNAc...) asparagine" evidence="3">
    <location>
        <position position="318"/>
    </location>
</feature>
<feature type="disulfide bond" evidence="1">
    <location>
        <begin position="83"/>
        <end position="135"/>
    </location>
</feature>
<feature type="disulfide bond" evidence="1">
    <location>
        <begin position="174"/>
        <end position="239"/>
    </location>
</feature>
<feature type="disulfide bond" evidence="1">
    <location>
        <begin position="182"/>
        <end position="232"/>
    </location>
</feature>
<feature type="disulfide bond" evidence="1">
    <location>
        <begin position="223"/>
        <end position="264"/>
    </location>
</feature>
<feature type="disulfide bond" evidence="1">
    <location>
        <begin position="252"/>
        <end position="300"/>
    </location>
</feature>
<feature type="disulfide bond" evidence="1">
    <location>
        <begin position="256"/>
        <end position="286"/>
    </location>
</feature>
<feature type="disulfide bond" evidence="1">
    <location>
        <begin position="316"/>
        <end position="394"/>
    </location>
</feature>
<feature type="disulfide bond" evidence="1">
    <location>
        <begin position="337"/>
        <end position="377"/>
    </location>
</feature>
<feature type="disulfide bond" evidence="1">
    <location>
        <begin position="365"/>
        <end position="389"/>
    </location>
</feature>
<feature type="sequence conflict" description="In Ref. 1; BAA75481." evidence="11" ref="1">
    <original>I</original>
    <variation>V</variation>
    <location>
        <position position="110"/>
    </location>
</feature>
<feature type="sequence conflict" description="In Ref. 1; BAA75481." evidence="11" ref="1">
    <original>R</original>
    <variation>C</variation>
    <location>
        <position position="242"/>
    </location>
</feature>
<feature type="sequence conflict" description="In Ref. 1; BAA75481." evidence="11" ref="1">
    <original>V</original>
    <variation>M</variation>
    <location>
        <position position="372"/>
    </location>
</feature>
<feature type="sequence conflict" description="In Ref. 1; BAA75481." evidence="11" ref="1">
    <original>D</original>
    <variation>Y</variation>
    <location>
        <position position="398"/>
    </location>
</feature>
<feature type="sequence conflict" description="In Ref. 1; BAA75481." evidence="11" ref="1">
    <original>V</original>
    <variation>C</variation>
    <location>
        <position position="612"/>
    </location>
</feature>
<feature type="sequence conflict" description="In Ref. 1; BAA75481." evidence="11" ref="1">
    <original>A</original>
    <variation>V</variation>
    <location>
        <position position="897"/>
    </location>
</feature>
<accession>Q9Z138</accession>
<accession>E9QKB3</accession>
<sequence>MARGWVRPSRVPLCARAVWTAAALLLWTPWTAGEVEDSEAIDTLGQPDGPDSPLPTLKGYFLNFLEPVNNITIVQGQTAILHCKVAGNPPPNVRWLKNDAPVVQEPRRVIIRKTEYGSRLRIQDLDTTDTGYYQCVATNGLKTITATGVLYVRLGPTHSPNHNFQDDDQEDGFCQPYRGIACARFIGNRTIYVDSLQMQGEIENRITAAFTMIGTSTQLSDQCSQFAIPSFCHFVFPLCDARSRAPKPRELCRDECEVLENDLCRQEYTIARSNPLILMRLQLPKCEALPMPESPDAANCMRIGIPAERLGRYHQCYNGSGADYRGMASTTKSGHQCQPWALQHPHSHRLSSTEFPELGGGHAYCRNPGGQVEGPWCFTQNKNVRVELCDVPPCSPRDGSKMGILYILVPSIAIPLVIACLFFLVCMCRNKQKASASTPQRRQLMASPSQDMEMPLISQHKQAKLKEISLSTVRFMEELGEDRFGKVYKGHLFGPAPGEPTQAVAIKTLKDKAEGPLREEFRQEAMLRARLQHPNIVCLLGVVTKDQPLSMIFSYCSHGDLHEFLVMRSPHSDVGSTDDDRTVKSALEPPDFVHVVAQIAAGMEFLSSHHVVHKDLATRNVLVYDKLNVRISDLGLFREVYSADYYKLMGNSLLPIRWMSPEAVMYGKFSIDSDIWSYGVVLWEVFSYGLQPYCGYSNQDVVEMIRSRQVLPCPDDCPAWVYALMIECWNEFPSRRPRFKDIHSRLRSWGNLSNYNSSAQTSGASNTTQTSSLSTSPVSNVSNARYMAPKQKAQPFPQPQFIPMKGQIRPLVPPAQLYIPVNGYQPVPAYGAYLPNFYPVQIPMQMAPQQVPPQMVPKPSSHHSGSGSTSTGYVTTAPSNTSVADRAALLSEGTEDAQNIAEDVAQSPVQEAEEEEEGSVPETELLGDNDTLQVTEAAHVQLEA</sequence>
<proteinExistence type="evidence at protein level"/>
<keyword id="KW-0067">ATP-binding</keyword>
<keyword id="KW-1003">Cell membrane</keyword>
<keyword id="KW-0217">Developmental protein</keyword>
<keyword id="KW-1015">Disulfide bond</keyword>
<keyword id="KW-0325">Glycoprotein</keyword>
<keyword id="KW-0393">Immunoglobulin domain</keyword>
<keyword id="KW-0418">Kinase</keyword>
<keyword id="KW-0420">Kringle</keyword>
<keyword id="KW-0460">Magnesium</keyword>
<keyword id="KW-0472">Membrane</keyword>
<keyword id="KW-0479">Metal-binding</keyword>
<keyword id="KW-0488">Methylation</keyword>
<keyword id="KW-0547">Nucleotide-binding</keyword>
<keyword id="KW-0597">Phosphoprotein</keyword>
<keyword id="KW-0675">Receptor</keyword>
<keyword id="KW-1185">Reference proteome</keyword>
<keyword id="KW-0732">Signal</keyword>
<keyword id="KW-0808">Transferase</keyword>
<keyword id="KW-0812">Transmembrane</keyword>
<keyword id="KW-1133">Transmembrane helix</keyword>
<keyword id="KW-0879">Wnt signaling pathway</keyword>
<evidence type="ECO:0000250" key="1"/>
<evidence type="ECO:0000250" key="2">
    <source>
        <dbReference type="UniProtKB" id="Q01974"/>
    </source>
</evidence>
<evidence type="ECO:0000255" key="3"/>
<evidence type="ECO:0000255" key="4">
    <source>
        <dbReference type="PROSITE-ProRule" id="PRU00090"/>
    </source>
</evidence>
<evidence type="ECO:0000255" key="5">
    <source>
        <dbReference type="PROSITE-ProRule" id="PRU00121"/>
    </source>
</evidence>
<evidence type="ECO:0000255" key="6">
    <source>
        <dbReference type="PROSITE-ProRule" id="PRU00159"/>
    </source>
</evidence>
<evidence type="ECO:0000255" key="7">
    <source>
        <dbReference type="PROSITE-ProRule" id="PRU10028"/>
    </source>
</evidence>
<evidence type="ECO:0000256" key="8">
    <source>
        <dbReference type="SAM" id="MobiDB-lite"/>
    </source>
</evidence>
<evidence type="ECO:0000269" key="9">
    <source>
    </source>
</evidence>
<evidence type="ECO:0000269" key="10">
    <source>
    </source>
</evidence>
<evidence type="ECO:0000305" key="11"/>
<evidence type="ECO:0007744" key="12">
    <source>
    </source>
</evidence>
<comment type="function">
    <text evidence="2 9">Tyrosine-protein kinase receptor which may be involved in the early formation of the chondrocytes. It seems to be required for cartilage and growth plate development (PubMed:10700181). Phosphorylates YWHAB, leading to induction of osteogenesis and bone formation. In contrast, has also been shown to have very little tyrosine kinase activity in vitro. May act as a receptor for wnt ligand WNT5A which may result in the inhibition of WNT3A-mediated signaling (By similarity).</text>
</comment>
<comment type="catalytic activity">
    <reaction evidence="2 7">
        <text>L-tyrosyl-[protein] + ATP = O-phospho-L-tyrosyl-[protein] + ADP + H(+)</text>
        <dbReference type="Rhea" id="RHEA:10596"/>
        <dbReference type="Rhea" id="RHEA-COMP:10136"/>
        <dbReference type="Rhea" id="RHEA-COMP:20101"/>
        <dbReference type="ChEBI" id="CHEBI:15378"/>
        <dbReference type="ChEBI" id="CHEBI:30616"/>
        <dbReference type="ChEBI" id="CHEBI:46858"/>
        <dbReference type="ChEBI" id="CHEBI:61978"/>
        <dbReference type="ChEBI" id="CHEBI:456216"/>
        <dbReference type="EC" id="2.7.10.1"/>
    </reaction>
</comment>
<comment type="cofactor">
    <cofactor evidence="2">
        <name>Mg(2+)</name>
        <dbReference type="ChEBI" id="CHEBI:18420"/>
    </cofactor>
</comment>
<comment type="subunit">
    <text evidence="2 10">Homodimer; promotes osteogenesis. Binds YWHAB (By similarity). Interacts with WTIP (PubMed:19785987). Interacts with ROR2 (By similarity).</text>
</comment>
<comment type="subcellular location">
    <subcellularLocation>
        <location evidence="10">Cell membrane</location>
        <topology evidence="10">Single-pass type I membrane protein</topology>
    </subcellularLocation>
</comment>
<comment type="developmental stage">
    <text evidence="10">From 9.5 to 11.5 dpc, expressed in the branchial arches, otic vesicle, limb buds, somites, craniofacial mesenchyme and tail buds. At 14.5 dpc, expressed in the developing tongue, nasal cavity, palate, adrenal gland, in the forebrain, dorsal root ganglia and in the somites. At 14.5 dpc, also detected in lung, rib cartilage, kidney and intestine (at protein level).</text>
</comment>
<comment type="similarity">
    <text evidence="6">Belongs to the protein kinase superfamily. Tyr protein kinase family. ROR subfamily.</text>
</comment>
<reference key="1">
    <citation type="journal article" date="1999" name="Genes Cells">
        <title>Spatio-temporally regulated expression of receptor tyrosine kinases, mRor1, mRor2, during mouse development: implications in development and function of the nervous system.</title>
        <authorList>
            <person name="Oishi I."/>
            <person name="Takeuchi S."/>
            <person name="Hashimoto R."/>
            <person name="Nagabukuro A."/>
            <person name="Ueda T."/>
            <person name="Liu Z.J."/>
            <person name="Hatta T."/>
            <person name="Akira S."/>
            <person name="Matsuda Y."/>
            <person name="Yamamura H."/>
            <person name="Otani H."/>
            <person name="Minami Y."/>
        </authorList>
    </citation>
    <scope>NUCLEOTIDE SEQUENCE [MRNA]</scope>
</reference>
<reference key="2">
    <citation type="journal article" date="2009" name="PLoS Biol.">
        <title>Lineage-specific biology revealed by a finished genome assembly of the mouse.</title>
        <authorList>
            <person name="Church D.M."/>
            <person name="Goodstadt L."/>
            <person name="Hillier L.W."/>
            <person name="Zody M.C."/>
            <person name="Goldstein S."/>
            <person name="She X."/>
            <person name="Bult C.J."/>
            <person name="Agarwala R."/>
            <person name="Cherry J.L."/>
            <person name="DiCuccio M."/>
            <person name="Hlavina W."/>
            <person name="Kapustin Y."/>
            <person name="Meric P."/>
            <person name="Maglott D."/>
            <person name="Birtle Z."/>
            <person name="Marques A.C."/>
            <person name="Graves T."/>
            <person name="Zhou S."/>
            <person name="Teague B."/>
            <person name="Potamousis K."/>
            <person name="Churas C."/>
            <person name="Place M."/>
            <person name="Herschleb J."/>
            <person name="Runnheim R."/>
            <person name="Forrest D."/>
            <person name="Amos-Landgraf J."/>
            <person name="Schwartz D.C."/>
            <person name="Cheng Z."/>
            <person name="Lindblad-Toh K."/>
            <person name="Eichler E.E."/>
            <person name="Ponting C.P."/>
        </authorList>
    </citation>
    <scope>NUCLEOTIDE SEQUENCE [LARGE SCALE GENOMIC DNA]</scope>
    <source>
        <strain>C57BL/6J</strain>
    </source>
</reference>
<reference key="3">
    <citation type="journal article" date="2000" name="Nat. Genet.">
        <title>Ror2, encoding a receptor-like tyrosine kinase, is required for cartilage and growth plate development.</title>
        <authorList>
            <person name="DeChiara T.M."/>
            <person name="Kimble R.B."/>
            <person name="Poueymirou W.T."/>
            <person name="Rojas J."/>
            <person name="Masiakowski P."/>
            <person name="Valenzuela D.M."/>
            <person name="Yancopoulos G.D."/>
        </authorList>
    </citation>
    <scope>FUNCTION</scope>
</reference>
<reference key="4">
    <citation type="journal article" date="2009" name="Biochem. Biophys. Res. Commun.">
        <title>The LIM domain protein Wtip interacts with the receptor tyrosine kinase Ror2 and inhibits canonical Wnt signalling.</title>
        <authorList>
            <person name="van Wijk N.V."/>
            <person name="Witte F."/>
            <person name="Feike A.C."/>
            <person name="Schambony A."/>
            <person name="Birchmeier W."/>
            <person name="Mundlos S."/>
            <person name="Stricker S."/>
        </authorList>
    </citation>
    <scope>INTERACTION WITH WTIP</scope>
    <scope>SUBCELLULAR LOCATION</scope>
    <scope>DEVELOPMENTAL STAGE</scope>
</reference>
<reference key="5">
    <citation type="journal article" date="2014" name="Mol. Cell. Proteomics">
        <title>Immunoaffinity enrichment and mass spectrometry analysis of protein methylation.</title>
        <authorList>
            <person name="Guo A."/>
            <person name="Gu H."/>
            <person name="Zhou J."/>
            <person name="Mulhern D."/>
            <person name="Wang Y."/>
            <person name="Lee K.A."/>
            <person name="Yang V."/>
            <person name="Aguiar M."/>
            <person name="Kornhauser J."/>
            <person name="Jia X."/>
            <person name="Ren J."/>
            <person name="Beausoleil S.A."/>
            <person name="Silva J.C."/>
            <person name="Vemulapalli V."/>
            <person name="Bedford M.T."/>
            <person name="Comb M.J."/>
        </authorList>
    </citation>
    <scope>METHYLATION [LARGE SCALE ANALYSIS] AT ARG-785</scope>
    <scope>IDENTIFICATION BY MASS SPECTROMETRY [LARGE SCALE ANALYSIS]</scope>
    <source>
        <tissue>Embryo</tissue>
    </source>
</reference>
<gene>
    <name type="primary">Ror2</name>
</gene>